<organism>
    <name type="scientific">Streptococcus pneumoniae (strain Hungary19A-6)</name>
    <dbReference type="NCBI Taxonomy" id="487214"/>
    <lineage>
        <taxon>Bacteria</taxon>
        <taxon>Bacillati</taxon>
        <taxon>Bacillota</taxon>
        <taxon>Bacilli</taxon>
        <taxon>Lactobacillales</taxon>
        <taxon>Streptococcaceae</taxon>
        <taxon>Streptococcus</taxon>
    </lineage>
</organism>
<sequence>MSFTVAVKEEILGQHHLSWHELSAIIKMSGNIGLSTSGLTLSVVTENAKLARHLYESFLHFYEIKSEIRHHQRSNLRKNRVYTVFTDEKVQDLLSDLHLADSFFGLETGIDEAILSDEEAGRAYLCGAFLANGSIRDPESGKYQLEISSVYLDHAQGIASLLQQFLLDAKVLERKKGAVTYLQRAEDIMDFLIVIGAMQARDDFERVKILRETRNDLNRANNAETANIARTVSASMKTINNISKIKDIMGLENLPVDLQEVAQLRIQHPDYSIQQLADSLSTPLTKSGVNHRLRKINKIADEL</sequence>
<reference key="1">
    <citation type="journal article" date="2010" name="Genome Biol.">
        <title>Structure and dynamics of the pan-genome of Streptococcus pneumoniae and closely related species.</title>
        <authorList>
            <person name="Donati C."/>
            <person name="Hiller N.L."/>
            <person name="Tettelin H."/>
            <person name="Muzzi A."/>
            <person name="Croucher N.J."/>
            <person name="Angiuoli S.V."/>
            <person name="Oggioni M."/>
            <person name="Dunning Hotopp J.C."/>
            <person name="Hu F.Z."/>
            <person name="Riley D.R."/>
            <person name="Covacci A."/>
            <person name="Mitchell T.J."/>
            <person name="Bentley S.D."/>
            <person name="Kilian M."/>
            <person name="Ehrlich G.D."/>
            <person name="Rappuoli R."/>
            <person name="Moxon E.R."/>
            <person name="Masignani V."/>
        </authorList>
    </citation>
    <scope>NUCLEOTIDE SEQUENCE [LARGE SCALE GENOMIC DNA]</scope>
    <source>
        <strain>Hungary19A-6</strain>
    </source>
</reference>
<dbReference type="EMBL" id="CP000936">
    <property type="protein sequence ID" value="ACA35599.1"/>
    <property type="molecule type" value="Genomic_DNA"/>
</dbReference>
<dbReference type="RefSeq" id="WP_000011303.1">
    <property type="nucleotide sequence ID" value="NC_010380.1"/>
</dbReference>
<dbReference type="SMR" id="B1ICY4"/>
<dbReference type="KEGG" id="spv:SPH_1678"/>
<dbReference type="HOGENOM" id="CLU_053282_0_0_9"/>
<dbReference type="Proteomes" id="UP000002163">
    <property type="component" value="Chromosome"/>
</dbReference>
<dbReference type="GO" id="GO:0003677">
    <property type="term" value="F:DNA binding"/>
    <property type="evidence" value="ECO:0007669"/>
    <property type="project" value="UniProtKB-UniRule"/>
</dbReference>
<dbReference type="GO" id="GO:0051301">
    <property type="term" value="P:cell division"/>
    <property type="evidence" value="ECO:0007669"/>
    <property type="project" value="UniProtKB-UniRule"/>
</dbReference>
<dbReference type="GO" id="GO:0043937">
    <property type="term" value="P:regulation of sporulation"/>
    <property type="evidence" value="ECO:0007669"/>
    <property type="project" value="InterPro"/>
</dbReference>
<dbReference type="FunFam" id="3.10.28.10:FF:000004">
    <property type="entry name" value="Probable cell division protein WhiA"/>
    <property type="match status" value="1"/>
</dbReference>
<dbReference type="Gene3D" id="3.10.28.10">
    <property type="entry name" value="Homing endonucleases"/>
    <property type="match status" value="1"/>
</dbReference>
<dbReference type="HAMAP" id="MF_01420">
    <property type="entry name" value="HTH_type_WhiA"/>
    <property type="match status" value="1"/>
</dbReference>
<dbReference type="InterPro" id="IPR027434">
    <property type="entry name" value="Homing_endonucl"/>
</dbReference>
<dbReference type="InterPro" id="IPR018478">
    <property type="entry name" value="Sporu_reg_WhiA_N_dom"/>
</dbReference>
<dbReference type="InterPro" id="IPR003802">
    <property type="entry name" value="Sporulation_regulator_WhiA"/>
</dbReference>
<dbReference type="InterPro" id="IPR023054">
    <property type="entry name" value="Sporulation_regulator_WhiA_C"/>
</dbReference>
<dbReference type="InterPro" id="IPR039518">
    <property type="entry name" value="WhiA_LAGLIDADG_dom"/>
</dbReference>
<dbReference type="NCBIfam" id="TIGR00647">
    <property type="entry name" value="DNA_bind_WhiA"/>
    <property type="match status" value="1"/>
</dbReference>
<dbReference type="PANTHER" id="PTHR37307">
    <property type="entry name" value="CELL DIVISION PROTEIN WHIA-RELATED"/>
    <property type="match status" value="1"/>
</dbReference>
<dbReference type="PANTHER" id="PTHR37307:SF1">
    <property type="entry name" value="CELL DIVISION PROTEIN WHIA-RELATED"/>
    <property type="match status" value="1"/>
</dbReference>
<dbReference type="Pfam" id="PF02650">
    <property type="entry name" value="HTH_WhiA"/>
    <property type="match status" value="1"/>
</dbReference>
<dbReference type="Pfam" id="PF14527">
    <property type="entry name" value="LAGLIDADG_WhiA"/>
    <property type="match status" value="1"/>
</dbReference>
<dbReference type="Pfam" id="PF10298">
    <property type="entry name" value="WhiA_N"/>
    <property type="match status" value="1"/>
</dbReference>
<dbReference type="SUPFAM" id="SSF55608">
    <property type="entry name" value="Homing endonucleases"/>
    <property type="match status" value="1"/>
</dbReference>
<name>WHIA_STRPI</name>
<accession>B1ICY4</accession>
<comment type="function">
    <text evidence="1">Involved in cell division and chromosome segregation.</text>
</comment>
<comment type="similarity">
    <text evidence="1">Belongs to the WhiA family.</text>
</comment>
<keyword id="KW-0131">Cell cycle</keyword>
<keyword id="KW-0132">Cell division</keyword>
<keyword id="KW-0238">DNA-binding</keyword>
<proteinExistence type="inferred from homology"/>
<gene>
    <name evidence="1" type="primary">whiA</name>
    <name type="ordered locus">SPH_1678</name>
</gene>
<evidence type="ECO:0000255" key="1">
    <source>
        <dbReference type="HAMAP-Rule" id="MF_01420"/>
    </source>
</evidence>
<protein>
    <recommendedName>
        <fullName evidence="1">Probable cell division protein WhiA</fullName>
    </recommendedName>
</protein>
<feature type="chain" id="PRO_0000376580" description="Probable cell division protein WhiA">
    <location>
        <begin position="1"/>
        <end position="303"/>
    </location>
</feature>
<feature type="DNA-binding region" description="H-T-H motif" evidence="1">
    <location>
        <begin position="272"/>
        <end position="303"/>
    </location>
</feature>